<protein>
    <recommendedName>
        <fullName evidence="9">Globin-like protein 26</fullName>
    </recommendedName>
</protein>
<feature type="initiator methionine" description="Removed" evidence="8">
    <location>
        <position position="1"/>
    </location>
</feature>
<feature type="chain" id="PRO_0000422159" description="Globin-like protein 26" evidence="6">
    <location>
        <begin position="2"/>
        <end position="183"/>
    </location>
</feature>
<feature type="domain" description="Globin" evidence="3">
    <location>
        <begin position="26"/>
        <end position="166"/>
    </location>
</feature>
<feature type="region of interest" description="Disordered" evidence="4">
    <location>
        <begin position="1"/>
        <end position="25"/>
    </location>
</feature>
<feature type="short sequence motif" description="Nuclear localization signal" evidence="8">
    <location>
        <begin position="12"/>
        <end position="18"/>
    </location>
</feature>
<feature type="binding site" description="distal binding residue" evidence="1">
    <location>
        <position position="77"/>
    </location>
    <ligand>
        <name>heme</name>
        <dbReference type="ChEBI" id="CHEBI:30413"/>
    </ligand>
    <ligandPart>
        <name>Fe</name>
        <dbReference type="ChEBI" id="CHEBI:18248"/>
    </ligandPart>
</feature>
<feature type="binding site" description="proximal binding residue" evidence="1">
    <location>
        <position position="109"/>
    </location>
    <ligand>
        <name>heme</name>
        <dbReference type="ChEBI" id="CHEBI:30413"/>
    </ligand>
    <ligandPart>
        <name>Fe</name>
        <dbReference type="ChEBI" id="CHEBI:18248"/>
    </ligandPart>
</feature>
<feature type="lipid moiety-binding region" description="N-myristoyl glycine" evidence="8">
    <location>
        <position position="2"/>
    </location>
</feature>
<feature type="mutagenesis site" description="Abolishes myristoylation and transport to nucleus." evidence="8">
    <original>G</original>
    <variation>A</variation>
    <location>
        <position position="2"/>
    </location>
</feature>
<sequence length="183" mass="21057">MGSSTSTPAPPPKKNKPEGRKADNQILNSYQKSIVRNAWRHMSQKGPSNCGSTITRRMMARKSTIGDILDRSTLDYHNLQIVEFLQKVMQSLDEPDKISKLCQEIGQKHAKYRRSKGMKIDYWDKLGEAITETIREYQGWKIHRESLRAATVLVSYVVDQLRFGYSRGLHVQGSRETKEDDEE</sequence>
<gene>
    <name evidence="11 12" type="primary">glb-26</name>
    <name type="ORF">T22C1.2</name>
</gene>
<dbReference type="EMBL" id="Z75550">
    <property type="protein sequence ID" value="CAA99921.1"/>
    <property type="molecule type" value="Genomic_DNA"/>
</dbReference>
<dbReference type="PIR" id="T25102">
    <property type="entry name" value="T25102"/>
</dbReference>
<dbReference type="RefSeq" id="NP_492188.1">
    <property type="nucleotide sequence ID" value="NM_059787.4"/>
</dbReference>
<dbReference type="SMR" id="Q22663"/>
<dbReference type="STRING" id="6239.T22C1.2.1"/>
<dbReference type="iPTMnet" id="Q22663"/>
<dbReference type="PaxDb" id="6239-T22C1.2"/>
<dbReference type="EnsemblMetazoa" id="T22C1.2.1">
    <property type="protein sequence ID" value="T22C1.2.1"/>
    <property type="gene ID" value="WBGene00011913"/>
</dbReference>
<dbReference type="GeneID" id="172564"/>
<dbReference type="KEGG" id="cel:CELE_T22C1.2"/>
<dbReference type="UCSC" id="T22C1.2">
    <property type="organism name" value="c. elegans"/>
</dbReference>
<dbReference type="AGR" id="WB:WBGene00011913"/>
<dbReference type="CTD" id="172564"/>
<dbReference type="WormBase" id="T22C1.2">
    <property type="protein sequence ID" value="CE06490"/>
    <property type="gene ID" value="WBGene00011913"/>
    <property type="gene designation" value="glb-26"/>
</dbReference>
<dbReference type="eggNOG" id="KOG3378">
    <property type="taxonomic scope" value="Eukaryota"/>
</dbReference>
<dbReference type="HOGENOM" id="CLU_099983_0_0_1"/>
<dbReference type="InParanoid" id="Q22663"/>
<dbReference type="OMA" id="NAWRHMS"/>
<dbReference type="OrthoDB" id="5869151at2759"/>
<dbReference type="PhylomeDB" id="Q22663"/>
<dbReference type="PRO" id="PR:Q22663"/>
<dbReference type="Proteomes" id="UP000001940">
    <property type="component" value="Chromosome I"/>
</dbReference>
<dbReference type="Bgee" id="WBGene00011913">
    <property type="expression patterns" value="Expressed in germ line (C elegans) and 3 other cell types or tissues"/>
</dbReference>
<dbReference type="GO" id="GO:0005737">
    <property type="term" value="C:cytoplasm"/>
    <property type="evidence" value="ECO:0007669"/>
    <property type="project" value="UniProtKB-SubCell"/>
</dbReference>
<dbReference type="GO" id="GO:0016020">
    <property type="term" value="C:membrane"/>
    <property type="evidence" value="ECO:0000314"/>
    <property type="project" value="UniProtKB"/>
</dbReference>
<dbReference type="GO" id="GO:0005652">
    <property type="term" value="C:nuclear lamina"/>
    <property type="evidence" value="ECO:0000314"/>
    <property type="project" value="UniProtKB"/>
</dbReference>
<dbReference type="GO" id="GO:0005886">
    <property type="term" value="C:plasma membrane"/>
    <property type="evidence" value="ECO:0007669"/>
    <property type="project" value="UniProtKB-SubCell"/>
</dbReference>
<dbReference type="GO" id="GO:0020037">
    <property type="term" value="F:heme binding"/>
    <property type="evidence" value="ECO:0007669"/>
    <property type="project" value="InterPro"/>
</dbReference>
<dbReference type="GO" id="GO:0046872">
    <property type="term" value="F:metal ion binding"/>
    <property type="evidence" value="ECO:0007669"/>
    <property type="project" value="UniProtKB-KW"/>
</dbReference>
<dbReference type="GO" id="GO:0019825">
    <property type="term" value="F:oxygen binding"/>
    <property type="evidence" value="ECO:0000318"/>
    <property type="project" value="GO_Central"/>
</dbReference>
<dbReference type="GO" id="GO:0005344">
    <property type="term" value="F:oxygen carrier activity"/>
    <property type="evidence" value="ECO:0000318"/>
    <property type="project" value="GO_Central"/>
</dbReference>
<dbReference type="GO" id="GO:0015671">
    <property type="term" value="P:oxygen transport"/>
    <property type="evidence" value="ECO:0000318"/>
    <property type="project" value="GO_Central"/>
</dbReference>
<dbReference type="GO" id="GO:0001666">
    <property type="term" value="P:response to hypoxia"/>
    <property type="evidence" value="ECO:0000318"/>
    <property type="project" value="GO_Central"/>
</dbReference>
<dbReference type="CDD" id="cd01040">
    <property type="entry name" value="Mb-like"/>
    <property type="match status" value="1"/>
</dbReference>
<dbReference type="Gene3D" id="1.10.490.10">
    <property type="entry name" value="Globins"/>
    <property type="match status" value="1"/>
</dbReference>
<dbReference type="InterPro" id="IPR000971">
    <property type="entry name" value="Globin"/>
</dbReference>
<dbReference type="InterPro" id="IPR050532">
    <property type="entry name" value="Globin-like_OT"/>
</dbReference>
<dbReference type="InterPro" id="IPR009050">
    <property type="entry name" value="Globin-like_sf"/>
</dbReference>
<dbReference type="InterPro" id="IPR012292">
    <property type="entry name" value="Globin/Proto"/>
</dbReference>
<dbReference type="InterPro" id="IPR044399">
    <property type="entry name" value="Mb-like_M"/>
</dbReference>
<dbReference type="PANTHER" id="PTHR46458">
    <property type="entry name" value="BLR2807 PROTEIN"/>
    <property type="match status" value="1"/>
</dbReference>
<dbReference type="PANTHER" id="PTHR46458:SF16">
    <property type="entry name" value="GLOBIN DOMAIN-CONTAINING PROTEIN-RELATED"/>
    <property type="match status" value="1"/>
</dbReference>
<dbReference type="Pfam" id="PF00042">
    <property type="entry name" value="Globin"/>
    <property type="match status" value="1"/>
</dbReference>
<dbReference type="SUPFAM" id="SSF46458">
    <property type="entry name" value="Globin-like"/>
    <property type="match status" value="1"/>
</dbReference>
<dbReference type="PROSITE" id="PS01033">
    <property type="entry name" value="GLOBIN"/>
    <property type="match status" value="1"/>
</dbReference>
<evidence type="ECO:0000250" key="1">
    <source>
        <dbReference type="UniProtKB" id="Q9NPG2"/>
    </source>
</evidence>
<evidence type="ECO:0000255" key="2"/>
<evidence type="ECO:0000255" key="3">
    <source>
        <dbReference type="PROSITE-ProRule" id="PRU00238"/>
    </source>
</evidence>
<evidence type="ECO:0000256" key="4">
    <source>
        <dbReference type="SAM" id="MobiDB-lite"/>
    </source>
</evidence>
<evidence type="ECO:0000269" key="5">
    <source>
    </source>
</evidence>
<evidence type="ECO:0000269" key="6">
    <source>
    </source>
</evidence>
<evidence type="ECO:0000269" key="7">
    <source>
    </source>
</evidence>
<evidence type="ECO:0000269" key="8">
    <source>
    </source>
</evidence>
<evidence type="ECO:0000303" key="9">
    <source>
    </source>
</evidence>
<evidence type="ECO:0000305" key="10"/>
<evidence type="ECO:0000312" key="11">
    <source>
        <dbReference type="EMBL" id="CAA99921.1"/>
    </source>
</evidence>
<evidence type="ECO:0000312" key="12">
    <source>
        <dbReference type="WormBase" id="T22C1.2"/>
    </source>
</evidence>
<comment type="function">
    <text evidence="6 7 8">Plays a role in electron transport. Utilizes the bis-histidyl hexacoordinated complex with iron to transfer electrons to cytochrome c and molecular oxygen. Plays a regulatory role in the periodicity of the defecation cycle under oxidative stress conditions. Not involved in imparting protection against general conditions of oxidative stress. May participate in redox reactions under anaerobic conditions.</text>
</comment>
<comment type="subunit">
    <text evidence="6 7">Homodimer. Occurs in an equilibrium of monomeric and dimeric forms in solution.</text>
</comment>
<comment type="subcellular location">
    <subcellularLocation>
        <location evidence="6 8">Cytoplasm</location>
    </subcellularLocation>
    <subcellularLocation>
        <location evidence="6 8">Nucleus lamina</location>
    </subcellularLocation>
    <subcellularLocation>
        <location evidence="6 8">Cell membrane</location>
    </subcellularLocation>
    <text evidence="6 8">Transported to the nucleus by myristoylation of the N-terminal glycine.</text>
</comment>
<comment type="tissue specificity">
    <text evidence="6 8">Detected in the head mesodermal cell. In the tail region, detected in the stomatointestinal and anal depressor muscle cells.</text>
</comment>
<comment type="developmental stage">
    <text evidence="5 6">Expressed at all developmental stages, but expression relative to adult is decreased in the L3 and dauer stages.</text>
</comment>
<comment type="induction">
    <text evidence="5 6">Up-regulated by anoxia but not affected by hypoxia.</text>
</comment>
<comment type="miscellaneous">
    <text evidence="6">Binds carbon monoxide (CO).</text>
</comment>
<comment type="similarity">
    <text evidence="2">Belongs to the globin family.</text>
</comment>
<accession>Q22663</accession>
<reference evidence="11" key="1">
    <citation type="journal article" date="1998" name="Science">
        <title>Genome sequence of the nematode C. elegans: a platform for investigating biology.</title>
        <authorList>
            <consortium name="The C. elegans sequencing consortium"/>
        </authorList>
    </citation>
    <scope>NUCLEOTIDE SEQUENCE [LARGE SCALE GENOMIC DNA]</scope>
    <source>
        <strain evidence="11">Bristol N2</strain>
    </source>
</reference>
<reference evidence="10" key="2">
    <citation type="journal article" date="2007" name="BMC Genomics">
        <title>Wide diversity in structure and expression profiles among members of the Caenorhabditis elegans globin protein family.</title>
        <authorList>
            <person name="Hoogewijs D."/>
            <person name="Geuens E."/>
            <person name="Dewilde S."/>
            <person name="Vierstraete A."/>
            <person name="Moens L."/>
            <person name="Vinogradov S."/>
            <person name="Vanfleteren J.R."/>
        </authorList>
    </citation>
    <scope>DEVELOPMENTAL STAGE</scope>
    <scope>INDUCTION</scope>
    <source>
        <strain evidence="5">Bristol N2</strain>
    </source>
</reference>
<reference evidence="10" key="3">
    <citation type="journal article" date="2010" name="BMC Biochem.">
        <title>Globin-like proteins in Caenorhabditis elegans: in vivo localization, ligand binding and structural properties.</title>
        <authorList>
            <person name="Geuens E."/>
            <person name="Hoogewijs D."/>
            <person name="Nardini M."/>
            <person name="Vinck E."/>
            <person name="Pesce A."/>
            <person name="Kiger L."/>
            <person name="Fago A."/>
            <person name="Tilleman L."/>
            <person name="De Henau S."/>
            <person name="Marden M.C."/>
            <person name="Weber R.E."/>
            <person name="Van Doorslaer S."/>
            <person name="Vanfleteren J."/>
            <person name="Moens L."/>
            <person name="Bolognesi M."/>
            <person name="Dewilde S."/>
        </authorList>
    </citation>
    <scope>FUNCTION</scope>
    <scope>SUBUNIT</scope>
    <scope>SUBCELLULAR LOCATION</scope>
    <scope>TISSUE SPECIFICITY</scope>
    <scope>INDUCTION</scope>
    <scope>HEME-BINDING</scope>
</reference>
<reference evidence="10" key="4">
    <citation type="journal article" date="2011" name="PLoS ONE">
        <title>Electron transfer function versus oxygen delivery: a comparative study for several hexacoordinated globins across the animal kingdom.</title>
        <authorList>
            <person name="Kiger L."/>
            <person name="Tilleman L."/>
            <person name="Geuens E."/>
            <person name="Hoogewijs D."/>
            <person name="Lechauve C."/>
            <person name="Moens L."/>
            <person name="Dewilde S."/>
            <person name="Marden M.C."/>
        </authorList>
    </citation>
    <scope>FUNCTION</scope>
    <scope>SUBUNIT</scope>
</reference>
<reference evidence="10" key="5">
    <citation type="journal article" date="2012" name="PLoS ONE">
        <title>An N-myristoylated globin with a redox-sensing function that regulates the defecation cycle in Caenorhabditis elegans.</title>
        <authorList>
            <person name="Tilleman L."/>
            <person name="De Henau S."/>
            <person name="Pauwels M."/>
            <person name="Nagy N."/>
            <person name="Pintelon I."/>
            <person name="Braeckman B.P."/>
            <person name="De Wael K."/>
            <person name="Van Doorslaer S."/>
            <person name="Adriaensen D."/>
            <person name="Timmermans J.P."/>
            <person name="Moens L."/>
            <person name="Dewilde S."/>
        </authorList>
    </citation>
    <scope>FUNCTION</scope>
    <scope>SUBCELLULAR LOCATION</scope>
    <scope>TISSUE SPECIFICITY</scope>
    <scope>EPR SPECTROSCOPY</scope>
    <scope>NUCLEAR LOCALIZATION SIGNAL</scope>
    <scope>MYRISTOYLATION AT GLY-2</scope>
    <scope>MUTAGENESIS OF GLY-2</scope>
</reference>
<organism>
    <name type="scientific">Caenorhabditis elegans</name>
    <dbReference type="NCBI Taxonomy" id="6239"/>
    <lineage>
        <taxon>Eukaryota</taxon>
        <taxon>Metazoa</taxon>
        <taxon>Ecdysozoa</taxon>
        <taxon>Nematoda</taxon>
        <taxon>Chromadorea</taxon>
        <taxon>Rhabditida</taxon>
        <taxon>Rhabditina</taxon>
        <taxon>Rhabditomorpha</taxon>
        <taxon>Rhabditoidea</taxon>
        <taxon>Rhabditidae</taxon>
        <taxon>Peloderinae</taxon>
        <taxon>Caenorhabditis</taxon>
    </lineage>
</organism>
<name>GLB26_CAEEL</name>
<proteinExistence type="evidence at protein level"/>
<keyword id="KW-1003">Cell membrane</keyword>
<keyword id="KW-0963">Cytoplasm</keyword>
<keyword id="KW-0349">Heme</keyword>
<keyword id="KW-0408">Iron</keyword>
<keyword id="KW-0449">Lipoprotein</keyword>
<keyword id="KW-0472">Membrane</keyword>
<keyword id="KW-0479">Metal-binding</keyword>
<keyword id="KW-0519">Myristate</keyword>
<keyword id="KW-0539">Nucleus</keyword>
<keyword id="KW-0561">Oxygen transport</keyword>
<keyword id="KW-1185">Reference proteome</keyword>
<keyword id="KW-0813">Transport</keyword>